<organism>
    <name type="scientific">Thunnus orientalis</name>
    <name type="common">North Pacific bluefin tuna</name>
    <name type="synonym">Thunnus thynnus orientalis</name>
    <dbReference type="NCBI Taxonomy" id="8238"/>
    <lineage>
        <taxon>Eukaryota</taxon>
        <taxon>Metazoa</taxon>
        <taxon>Chordata</taxon>
        <taxon>Craniata</taxon>
        <taxon>Vertebrata</taxon>
        <taxon>Euteleostomi</taxon>
        <taxon>Actinopterygii</taxon>
        <taxon>Neopterygii</taxon>
        <taxon>Teleostei</taxon>
        <taxon>Neoteleostei</taxon>
        <taxon>Acanthomorphata</taxon>
        <taxon>Pelagiaria</taxon>
        <taxon>Scombriformes</taxon>
        <taxon>Scombridae</taxon>
        <taxon>Thunnus</taxon>
    </lineage>
</organism>
<dbReference type="SMR" id="C0HJI5"/>
<dbReference type="GO" id="GO:0005615">
    <property type="term" value="C:extracellular space"/>
    <property type="evidence" value="ECO:0007669"/>
    <property type="project" value="TreeGrafter"/>
</dbReference>
<dbReference type="GO" id="GO:0005179">
    <property type="term" value="F:hormone activity"/>
    <property type="evidence" value="ECO:0007669"/>
    <property type="project" value="UniProtKB-KW"/>
</dbReference>
<dbReference type="GO" id="GO:0006006">
    <property type="term" value="P:glucose metabolic process"/>
    <property type="evidence" value="ECO:0007669"/>
    <property type="project" value="UniProtKB-KW"/>
</dbReference>
<dbReference type="CDD" id="cd04367">
    <property type="entry name" value="IlGF_insulin_like"/>
    <property type="match status" value="1"/>
</dbReference>
<dbReference type="Gene3D" id="1.10.100.10">
    <property type="entry name" value="Insulin-like"/>
    <property type="match status" value="1"/>
</dbReference>
<dbReference type="InterPro" id="IPR004825">
    <property type="entry name" value="Insulin"/>
</dbReference>
<dbReference type="InterPro" id="IPR016179">
    <property type="entry name" value="Insulin-like"/>
</dbReference>
<dbReference type="InterPro" id="IPR036438">
    <property type="entry name" value="Insulin-like_sf"/>
</dbReference>
<dbReference type="InterPro" id="IPR022353">
    <property type="entry name" value="Insulin_CS"/>
</dbReference>
<dbReference type="InterPro" id="IPR022352">
    <property type="entry name" value="Insulin_family"/>
</dbReference>
<dbReference type="PANTHER" id="PTHR11454:SF9">
    <property type="entry name" value="INSULIN"/>
    <property type="match status" value="1"/>
</dbReference>
<dbReference type="PANTHER" id="PTHR11454">
    <property type="entry name" value="INSULIN/INSULIN GROWTH FACTOR"/>
    <property type="match status" value="1"/>
</dbReference>
<dbReference type="Pfam" id="PF00049">
    <property type="entry name" value="Insulin"/>
    <property type="match status" value="1"/>
</dbReference>
<dbReference type="PRINTS" id="PR00277">
    <property type="entry name" value="INSULIN"/>
</dbReference>
<dbReference type="PRINTS" id="PR00276">
    <property type="entry name" value="INSULINFAMLY"/>
</dbReference>
<dbReference type="SMART" id="SM00078">
    <property type="entry name" value="IlGF"/>
    <property type="match status" value="1"/>
</dbReference>
<dbReference type="SUPFAM" id="SSF56994">
    <property type="entry name" value="Insulin-like"/>
    <property type="match status" value="1"/>
</dbReference>
<dbReference type="PROSITE" id="PS00262">
    <property type="entry name" value="INSULIN"/>
    <property type="match status" value="1"/>
</dbReference>
<accession>C0HJI5</accession>
<keyword id="KW-0119">Carbohydrate metabolism</keyword>
<keyword id="KW-0903">Direct protein sequencing</keyword>
<keyword id="KW-1015">Disulfide bond</keyword>
<keyword id="KW-0313">Glucose metabolism</keyword>
<keyword id="KW-0372">Hormone</keyword>
<keyword id="KW-0964">Secreted</keyword>
<comment type="function">
    <text evidence="1">Insulin decreases blood glucose concentration. It increases cell permeability to monosaccharides, amino acids and fatty acids. It accelerates glycolysis, the pentose phosphate cycle, and glycogen synthesis in liver (By similarity).</text>
</comment>
<comment type="subunit">
    <text evidence="1">Heterodimer of a B chain and an A chain linked by two disulfide bonds.</text>
</comment>
<comment type="subcellular location">
    <subcellularLocation>
        <location evidence="1">Secreted</location>
    </subcellularLocation>
</comment>
<comment type="similarity">
    <text evidence="3">Belongs to the insulin family.</text>
</comment>
<sequence>ISSQHLCGSHLVEALNLVCGDRGFFYNPRGIVEQCCHRPCSMFELENYCN</sequence>
<evidence type="ECO:0000250" key="1"/>
<evidence type="ECO:0000250" key="2">
    <source>
        <dbReference type="UniProtKB" id="P01339"/>
    </source>
</evidence>
<evidence type="ECO:0000255" key="3"/>
<evidence type="ECO:0000269" key="4">
    <source ref="1"/>
</evidence>
<evidence type="ECO:0000303" key="5">
    <source ref="1"/>
</evidence>
<evidence type="ECO:0000305" key="6"/>
<proteinExistence type="evidence at protein level"/>
<protein>
    <recommendedName>
        <fullName evidence="5">Insulin-1</fullName>
    </recommendedName>
    <component>
        <recommendedName>
            <fullName evidence="5">Insulin-1 B chain</fullName>
        </recommendedName>
    </component>
    <component>
        <recommendedName>
            <fullName evidence="5">Insulin-1 A chain</fullName>
        </recommendedName>
    </component>
</protein>
<reference evidence="6" key="1">
    <citation type="submission" date="2014-04" db="UniProtKB">
        <title>Primary structures of two insulins from tuna.</title>
        <authorList>
            <person name="Andoh T."/>
        </authorList>
    </citation>
    <scope>PROTEIN SEQUENCE</scope>
</reference>
<feature type="peptide" id="PRO_0000429394" description="Insulin-1 B chain" evidence="4">
    <location>
        <begin position="1"/>
        <end position="29"/>
    </location>
</feature>
<feature type="peptide" id="PRO_0000429395" description="Insulin-1 A chain" evidence="4">
    <location>
        <begin position="30"/>
        <end position="50"/>
    </location>
</feature>
<feature type="disulfide bond" description="Interchain (between B and A chains)" evidence="2">
    <location>
        <begin position="7"/>
        <end position="36"/>
    </location>
</feature>
<feature type="disulfide bond" description="Interchain (between B and A chains)" evidence="2">
    <location>
        <begin position="19"/>
        <end position="49"/>
    </location>
</feature>
<feature type="disulfide bond" evidence="2">
    <location>
        <begin position="35"/>
        <end position="40"/>
    </location>
</feature>
<feature type="non-consecutive residues" evidence="5">
    <location>
        <begin position="29"/>
        <end position="30"/>
    </location>
</feature>
<name>INS1_THUOR</name>